<protein>
    <recommendedName>
        <fullName evidence="1">Threonine--tRNA ligase</fullName>
        <ecNumber evidence="1">6.1.1.3</ecNumber>
    </recommendedName>
    <alternativeName>
        <fullName evidence="1">Threonyl-tRNA synthetase</fullName>
        <shortName evidence="1">ThrRS</shortName>
    </alternativeName>
</protein>
<gene>
    <name evidence="1" type="primary">thrS</name>
    <name type="ordered locus">RHECIAT_CH0002285</name>
</gene>
<feature type="chain" id="PRO_1000098601" description="Threonine--tRNA ligase">
    <location>
        <begin position="1"/>
        <end position="668"/>
    </location>
</feature>
<feature type="domain" description="TGS" evidence="2">
    <location>
        <begin position="1"/>
        <end position="64"/>
    </location>
</feature>
<feature type="region of interest" description="Catalytic" evidence="1">
    <location>
        <begin position="245"/>
        <end position="553"/>
    </location>
</feature>
<feature type="binding site" evidence="1">
    <location>
        <position position="347"/>
    </location>
    <ligand>
        <name>Zn(2+)</name>
        <dbReference type="ChEBI" id="CHEBI:29105"/>
    </ligand>
</feature>
<feature type="binding site" evidence="1">
    <location>
        <position position="398"/>
    </location>
    <ligand>
        <name>Zn(2+)</name>
        <dbReference type="ChEBI" id="CHEBI:29105"/>
    </ligand>
</feature>
<feature type="binding site" evidence="1">
    <location>
        <position position="530"/>
    </location>
    <ligand>
        <name>Zn(2+)</name>
        <dbReference type="ChEBI" id="CHEBI:29105"/>
    </ligand>
</feature>
<sequence>MSQAISLTFPDGSVRSFPAGATGKDVAESISKSLAKSAVAIAIDGAVRDLSDAVTDGKIEIITRKDGRALELIRHDAAHVMAEAVQELWPGTQVTIGPVIENGFYYDFAKNEPFTPDDLPKIEKKMKEIIARNAPFTKQIWSREKAKEVFAAKGEQYKVELVDAIPEGQDLKIYHQGDWFDLCRGPHMASTGQVGTAFKLMKVAGAYWRGDSNNAMLSRIYGTAWADQADLDNYLHMLAEAEKRDHRKLGREMDLFHFQEEGPGVVFWHGKGWRIFQTLVAYMRRRLAADYQEVNAPQVLDTSLWETSGHWGWYQENMFAVKSAHAMTHPEDKEADNRVFALKPMNCPGHVQIFKHGLKSYRELPIRLAEFGLVHRYEPSGALHGLMRVRGFTQDDAHIFCTDEQMAAECLKINDLILSVYEDFGFKEIVVKLSTRPEKRVGSDALWDRAEAVMTDVLKTIEAQSEGRIKTGILPGEGAFYGPKFEYTLKDAIGREWQCGTTQVDFNLPERFGAFYIDSNSEKTQPVMIHRAICGSMERFLGILIENFAGHMPLWVSPLQVVVATITSEADAYGLEVAEALRDAGLNVETDFRNEKINYKIREHSVTKVPVIIVCGRKEAEERTVNIRRLGSQDQVSMGLDAAVESLTLEATPPDIRRKAEAKKAKAA</sequence>
<reference key="1">
    <citation type="journal article" date="2010" name="Appl. Environ. Microbiol.">
        <title>Conserved symbiotic plasmid DNA sequences in the multireplicon pangenomic structure of Rhizobium etli.</title>
        <authorList>
            <person name="Gonzalez V."/>
            <person name="Acosta J.L."/>
            <person name="Santamaria R.I."/>
            <person name="Bustos P."/>
            <person name="Fernandez J.L."/>
            <person name="Hernandez Gonzalez I.L."/>
            <person name="Diaz R."/>
            <person name="Flores M."/>
            <person name="Palacios R."/>
            <person name="Mora J."/>
            <person name="Davila G."/>
        </authorList>
    </citation>
    <scope>NUCLEOTIDE SEQUENCE [LARGE SCALE GENOMIC DNA]</scope>
    <source>
        <strain>CIAT 652</strain>
    </source>
</reference>
<name>SYT_RHIE6</name>
<dbReference type="EC" id="6.1.1.3" evidence="1"/>
<dbReference type="EMBL" id="CP001074">
    <property type="protein sequence ID" value="ACE91240.1"/>
    <property type="molecule type" value="Genomic_DNA"/>
</dbReference>
<dbReference type="SMR" id="B3PNV4"/>
<dbReference type="KEGG" id="rec:RHECIAT_CH0002285"/>
<dbReference type="eggNOG" id="COG0441">
    <property type="taxonomic scope" value="Bacteria"/>
</dbReference>
<dbReference type="HOGENOM" id="CLU_008554_0_1_5"/>
<dbReference type="Proteomes" id="UP000008817">
    <property type="component" value="Chromosome"/>
</dbReference>
<dbReference type="GO" id="GO:0005829">
    <property type="term" value="C:cytosol"/>
    <property type="evidence" value="ECO:0007669"/>
    <property type="project" value="TreeGrafter"/>
</dbReference>
<dbReference type="GO" id="GO:0005524">
    <property type="term" value="F:ATP binding"/>
    <property type="evidence" value="ECO:0007669"/>
    <property type="project" value="UniProtKB-UniRule"/>
</dbReference>
<dbReference type="GO" id="GO:0046872">
    <property type="term" value="F:metal ion binding"/>
    <property type="evidence" value="ECO:0007669"/>
    <property type="project" value="UniProtKB-KW"/>
</dbReference>
<dbReference type="GO" id="GO:0004829">
    <property type="term" value="F:threonine-tRNA ligase activity"/>
    <property type="evidence" value="ECO:0007669"/>
    <property type="project" value="UniProtKB-UniRule"/>
</dbReference>
<dbReference type="GO" id="GO:0000049">
    <property type="term" value="F:tRNA binding"/>
    <property type="evidence" value="ECO:0007669"/>
    <property type="project" value="UniProtKB-KW"/>
</dbReference>
<dbReference type="GO" id="GO:0006435">
    <property type="term" value="P:threonyl-tRNA aminoacylation"/>
    <property type="evidence" value="ECO:0007669"/>
    <property type="project" value="UniProtKB-UniRule"/>
</dbReference>
<dbReference type="CDD" id="cd01667">
    <property type="entry name" value="TGS_ThrRS"/>
    <property type="match status" value="1"/>
</dbReference>
<dbReference type="CDD" id="cd00860">
    <property type="entry name" value="ThrRS_anticodon"/>
    <property type="match status" value="1"/>
</dbReference>
<dbReference type="CDD" id="cd00771">
    <property type="entry name" value="ThrRS_core"/>
    <property type="match status" value="1"/>
</dbReference>
<dbReference type="FunFam" id="3.30.54.20:FF:000002">
    <property type="entry name" value="Threonine--tRNA ligase"/>
    <property type="match status" value="1"/>
</dbReference>
<dbReference type="FunFam" id="3.30.930.10:FF:000002">
    <property type="entry name" value="Threonine--tRNA ligase"/>
    <property type="match status" value="1"/>
</dbReference>
<dbReference type="FunFam" id="3.40.50.800:FF:000001">
    <property type="entry name" value="Threonine--tRNA ligase"/>
    <property type="match status" value="1"/>
</dbReference>
<dbReference type="FunFam" id="3.30.980.10:FF:000005">
    <property type="entry name" value="Threonyl-tRNA synthetase, mitochondrial"/>
    <property type="match status" value="1"/>
</dbReference>
<dbReference type="Gene3D" id="3.10.20.30">
    <property type="match status" value="1"/>
</dbReference>
<dbReference type="Gene3D" id="3.30.54.20">
    <property type="match status" value="1"/>
</dbReference>
<dbReference type="Gene3D" id="3.40.50.800">
    <property type="entry name" value="Anticodon-binding domain"/>
    <property type="match status" value="1"/>
</dbReference>
<dbReference type="Gene3D" id="3.30.930.10">
    <property type="entry name" value="Bira Bifunctional Protein, Domain 2"/>
    <property type="match status" value="1"/>
</dbReference>
<dbReference type="Gene3D" id="3.30.980.10">
    <property type="entry name" value="Threonyl-trna Synthetase, Chain A, domain 2"/>
    <property type="match status" value="1"/>
</dbReference>
<dbReference type="HAMAP" id="MF_00184">
    <property type="entry name" value="Thr_tRNA_synth"/>
    <property type="match status" value="1"/>
</dbReference>
<dbReference type="InterPro" id="IPR002314">
    <property type="entry name" value="aa-tRNA-synt_IIb"/>
</dbReference>
<dbReference type="InterPro" id="IPR006195">
    <property type="entry name" value="aa-tRNA-synth_II"/>
</dbReference>
<dbReference type="InterPro" id="IPR045864">
    <property type="entry name" value="aa-tRNA-synth_II/BPL/LPL"/>
</dbReference>
<dbReference type="InterPro" id="IPR004154">
    <property type="entry name" value="Anticodon-bd"/>
</dbReference>
<dbReference type="InterPro" id="IPR036621">
    <property type="entry name" value="Anticodon-bd_dom_sf"/>
</dbReference>
<dbReference type="InterPro" id="IPR012675">
    <property type="entry name" value="Beta-grasp_dom_sf"/>
</dbReference>
<dbReference type="InterPro" id="IPR004095">
    <property type="entry name" value="TGS"/>
</dbReference>
<dbReference type="InterPro" id="IPR012676">
    <property type="entry name" value="TGS-like"/>
</dbReference>
<dbReference type="InterPro" id="IPR002320">
    <property type="entry name" value="Thr-tRNA-ligase_IIa"/>
</dbReference>
<dbReference type="InterPro" id="IPR018163">
    <property type="entry name" value="Thr/Ala-tRNA-synth_IIc_edit"/>
</dbReference>
<dbReference type="InterPro" id="IPR047246">
    <property type="entry name" value="ThrRS_anticodon"/>
</dbReference>
<dbReference type="InterPro" id="IPR033728">
    <property type="entry name" value="ThrRS_core"/>
</dbReference>
<dbReference type="InterPro" id="IPR012947">
    <property type="entry name" value="tRNA_SAD"/>
</dbReference>
<dbReference type="NCBIfam" id="TIGR00418">
    <property type="entry name" value="thrS"/>
    <property type="match status" value="1"/>
</dbReference>
<dbReference type="PANTHER" id="PTHR11451:SF44">
    <property type="entry name" value="THREONINE--TRNA LIGASE, CHLOROPLASTIC_MITOCHONDRIAL 2"/>
    <property type="match status" value="1"/>
</dbReference>
<dbReference type="PANTHER" id="PTHR11451">
    <property type="entry name" value="THREONINE-TRNA LIGASE"/>
    <property type="match status" value="1"/>
</dbReference>
<dbReference type="Pfam" id="PF03129">
    <property type="entry name" value="HGTP_anticodon"/>
    <property type="match status" value="1"/>
</dbReference>
<dbReference type="Pfam" id="PF02824">
    <property type="entry name" value="TGS"/>
    <property type="match status" value="1"/>
</dbReference>
<dbReference type="Pfam" id="PF00587">
    <property type="entry name" value="tRNA-synt_2b"/>
    <property type="match status" value="1"/>
</dbReference>
<dbReference type="Pfam" id="PF07973">
    <property type="entry name" value="tRNA_SAD"/>
    <property type="match status" value="1"/>
</dbReference>
<dbReference type="PRINTS" id="PR01047">
    <property type="entry name" value="TRNASYNTHTHR"/>
</dbReference>
<dbReference type="SMART" id="SM00863">
    <property type="entry name" value="tRNA_SAD"/>
    <property type="match status" value="1"/>
</dbReference>
<dbReference type="SUPFAM" id="SSF52954">
    <property type="entry name" value="Class II aaRS ABD-related"/>
    <property type="match status" value="1"/>
</dbReference>
<dbReference type="SUPFAM" id="SSF55681">
    <property type="entry name" value="Class II aaRS and biotin synthetases"/>
    <property type="match status" value="1"/>
</dbReference>
<dbReference type="SUPFAM" id="SSF81271">
    <property type="entry name" value="TGS-like"/>
    <property type="match status" value="1"/>
</dbReference>
<dbReference type="SUPFAM" id="SSF55186">
    <property type="entry name" value="ThrRS/AlaRS common domain"/>
    <property type="match status" value="1"/>
</dbReference>
<dbReference type="PROSITE" id="PS50862">
    <property type="entry name" value="AA_TRNA_LIGASE_II"/>
    <property type="match status" value="1"/>
</dbReference>
<dbReference type="PROSITE" id="PS51880">
    <property type="entry name" value="TGS"/>
    <property type="match status" value="1"/>
</dbReference>
<keyword id="KW-0030">Aminoacyl-tRNA synthetase</keyword>
<keyword id="KW-0067">ATP-binding</keyword>
<keyword id="KW-0963">Cytoplasm</keyword>
<keyword id="KW-0436">Ligase</keyword>
<keyword id="KW-0479">Metal-binding</keyword>
<keyword id="KW-0547">Nucleotide-binding</keyword>
<keyword id="KW-0648">Protein biosynthesis</keyword>
<keyword id="KW-0694">RNA-binding</keyword>
<keyword id="KW-0820">tRNA-binding</keyword>
<keyword id="KW-0862">Zinc</keyword>
<proteinExistence type="inferred from homology"/>
<organism>
    <name type="scientific">Rhizobium etli (strain CIAT 652)</name>
    <dbReference type="NCBI Taxonomy" id="491916"/>
    <lineage>
        <taxon>Bacteria</taxon>
        <taxon>Pseudomonadati</taxon>
        <taxon>Pseudomonadota</taxon>
        <taxon>Alphaproteobacteria</taxon>
        <taxon>Hyphomicrobiales</taxon>
        <taxon>Rhizobiaceae</taxon>
        <taxon>Rhizobium/Agrobacterium group</taxon>
        <taxon>Rhizobium</taxon>
    </lineage>
</organism>
<accession>B3PNV4</accession>
<evidence type="ECO:0000255" key="1">
    <source>
        <dbReference type="HAMAP-Rule" id="MF_00184"/>
    </source>
</evidence>
<evidence type="ECO:0000255" key="2">
    <source>
        <dbReference type="PROSITE-ProRule" id="PRU01228"/>
    </source>
</evidence>
<comment type="function">
    <text evidence="1">Catalyzes the attachment of threonine to tRNA(Thr) in a two-step reaction: L-threonine is first activated by ATP to form Thr-AMP and then transferred to the acceptor end of tRNA(Thr). Also edits incorrectly charged L-seryl-tRNA(Thr).</text>
</comment>
<comment type="catalytic activity">
    <reaction evidence="1">
        <text>tRNA(Thr) + L-threonine + ATP = L-threonyl-tRNA(Thr) + AMP + diphosphate + H(+)</text>
        <dbReference type="Rhea" id="RHEA:24624"/>
        <dbReference type="Rhea" id="RHEA-COMP:9670"/>
        <dbReference type="Rhea" id="RHEA-COMP:9704"/>
        <dbReference type="ChEBI" id="CHEBI:15378"/>
        <dbReference type="ChEBI" id="CHEBI:30616"/>
        <dbReference type="ChEBI" id="CHEBI:33019"/>
        <dbReference type="ChEBI" id="CHEBI:57926"/>
        <dbReference type="ChEBI" id="CHEBI:78442"/>
        <dbReference type="ChEBI" id="CHEBI:78534"/>
        <dbReference type="ChEBI" id="CHEBI:456215"/>
        <dbReference type="EC" id="6.1.1.3"/>
    </reaction>
</comment>
<comment type="cofactor">
    <cofactor evidence="1">
        <name>Zn(2+)</name>
        <dbReference type="ChEBI" id="CHEBI:29105"/>
    </cofactor>
    <text evidence="1">Binds 1 zinc ion per subunit.</text>
</comment>
<comment type="subunit">
    <text evidence="1">Homodimer.</text>
</comment>
<comment type="subcellular location">
    <subcellularLocation>
        <location evidence="1">Cytoplasm</location>
    </subcellularLocation>
</comment>
<comment type="similarity">
    <text evidence="1">Belongs to the class-II aminoacyl-tRNA synthetase family.</text>
</comment>